<feature type="chain" id="PRO_0000171483" description="Small ribosomal subunit biogenesis GTPase RsgA 1">
    <location>
        <begin position="1"/>
        <end position="298"/>
    </location>
</feature>
<feature type="domain" description="CP-type G" evidence="2">
    <location>
        <begin position="63"/>
        <end position="224"/>
    </location>
</feature>
<feature type="binding site" evidence="1">
    <location>
        <begin position="112"/>
        <end position="115"/>
    </location>
    <ligand>
        <name>GTP</name>
        <dbReference type="ChEBI" id="CHEBI:37565"/>
    </ligand>
</feature>
<feature type="binding site" evidence="1">
    <location>
        <begin position="167"/>
        <end position="175"/>
    </location>
    <ligand>
        <name>GTP</name>
        <dbReference type="ChEBI" id="CHEBI:37565"/>
    </ligand>
</feature>
<feature type="binding site" evidence="1">
    <location>
        <position position="248"/>
    </location>
    <ligand>
        <name>Zn(2+)</name>
        <dbReference type="ChEBI" id="CHEBI:29105"/>
    </ligand>
</feature>
<feature type="binding site" evidence="1">
    <location>
        <position position="253"/>
    </location>
    <ligand>
        <name>Zn(2+)</name>
        <dbReference type="ChEBI" id="CHEBI:29105"/>
    </ligand>
</feature>
<feature type="binding site" evidence="1">
    <location>
        <position position="255"/>
    </location>
    <ligand>
        <name>Zn(2+)</name>
        <dbReference type="ChEBI" id="CHEBI:29105"/>
    </ligand>
</feature>
<feature type="binding site" evidence="1">
    <location>
        <position position="261"/>
    </location>
    <ligand>
        <name>Zn(2+)</name>
        <dbReference type="ChEBI" id="CHEBI:29105"/>
    </ligand>
</feature>
<organism>
    <name type="scientific">Lactiplantibacillus plantarum (strain ATCC BAA-793 / NCIMB 8826 / WCFS1)</name>
    <name type="common">Lactobacillus plantarum</name>
    <dbReference type="NCBI Taxonomy" id="220668"/>
    <lineage>
        <taxon>Bacteria</taxon>
        <taxon>Bacillati</taxon>
        <taxon>Bacillota</taxon>
        <taxon>Bacilli</taxon>
        <taxon>Lactobacillales</taxon>
        <taxon>Lactobacillaceae</taxon>
        <taxon>Lactiplantibacillus</taxon>
    </lineage>
</organism>
<name>RSGA1_LACPL</name>
<comment type="function">
    <text evidence="1">One of several proteins that assist in the late maturation steps of the functional core of the 30S ribosomal subunit. Helps release RbfA from mature subunits. May play a role in the assembly of ribosomal proteins into the subunit. Circularly permuted GTPase that catalyzes slow GTP hydrolysis, GTPase activity is stimulated by the 30S ribosomal subunit.</text>
</comment>
<comment type="cofactor">
    <cofactor evidence="1">
        <name>Zn(2+)</name>
        <dbReference type="ChEBI" id="CHEBI:29105"/>
    </cofactor>
    <text evidence="1">Binds 1 zinc ion per subunit.</text>
</comment>
<comment type="subunit">
    <text evidence="1">Monomer. Associates with 30S ribosomal subunit, binds 16S rRNA.</text>
</comment>
<comment type="subcellular location">
    <subcellularLocation>
        <location evidence="1">Cytoplasm</location>
    </subcellularLocation>
</comment>
<comment type="similarity">
    <text evidence="1">Belongs to the TRAFAC class YlqF/YawG GTPase family. RsgA subfamily.</text>
</comment>
<dbReference type="EC" id="3.6.1.-" evidence="1"/>
<dbReference type="EMBL" id="AL935263">
    <property type="protein sequence ID" value="CCC78933.1"/>
    <property type="molecule type" value="Genomic_DNA"/>
</dbReference>
<dbReference type="RefSeq" id="WP_011101479.1">
    <property type="nucleotide sequence ID" value="NC_004567.2"/>
</dbReference>
<dbReference type="RefSeq" id="YP_004889447.1">
    <property type="nucleotide sequence ID" value="NC_004567.2"/>
</dbReference>
<dbReference type="SMR" id="Q88WK9"/>
<dbReference type="STRING" id="220668.lp_1620"/>
<dbReference type="EnsemblBacteria" id="CCC78933">
    <property type="protein sequence ID" value="CCC78933"/>
    <property type="gene ID" value="lp_1620"/>
</dbReference>
<dbReference type="KEGG" id="lpl:lp_1620"/>
<dbReference type="PATRIC" id="fig|220668.9.peg.1368"/>
<dbReference type="eggNOG" id="COG1162">
    <property type="taxonomic scope" value="Bacteria"/>
</dbReference>
<dbReference type="HOGENOM" id="CLU_033617_2_1_9"/>
<dbReference type="OrthoDB" id="9809485at2"/>
<dbReference type="PhylomeDB" id="Q88WK9"/>
<dbReference type="Proteomes" id="UP000000432">
    <property type="component" value="Chromosome"/>
</dbReference>
<dbReference type="GO" id="GO:0005737">
    <property type="term" value="C:cytoplasm"/>
    <property type="evidence" value="ECO:0007669"/>
    <property type="project" value="UniProtKB-SubCell"/>
</dbReference>
<dbReference type="GO" id="GO:0005525">
    <property type="term" value="F:GTP binding"/>
    <property type="evidence" value="ECO:0007669"/>
    <property type="project" value="UniProtKB-UniRule"/>
</dbReference>
<dbReference type="GO" id="GO:0003924">
    <property type="term" value="F:GTPase activity"/>
    <property type="evidence" value="ECO:0007669"/>
    <property type="project" value="UniProtKB-UniRule"/>
</dbReference>
<dbReference type="GO" id="GO:0046872">
    <property type="term" value="F:metal ion binding"/>
    <property type="evidence" value="ECO:0007669"/>
    <property type="project" value="UniProtKB-KW"/>
</dbReference>
<dbReference type="GO" id="GO:0019843">
    <property type="term" value="F:rRNA binding"/>
    <property type="evidence" value="ECO:0007669"/>
    <property type="project" value="UniProtKB-KW"/>
</dbReference>
<dbReference type="GO" id="GO:0042274">
    <property type="term" value="P:ribosomal small subunit biogenesis"/>
    <property type="evidence" value="ECO:0007669"/>
    <property type="project" value="UniProtKB-UniRule"/>
</dbReference>
<dbReference type="CDD" id="cd04466">
    <property type="entry name" value="S1_YloQ_GTPase"/>
    <property type="match status" value="1"/>
</dbReference>
<dbReference type="CDD" id="cd01854">
    <property type="entry name" value="YjeQ_EngC"/>
    <property type="match status" value="1"/>
</dbReference>
<dbReference type="Gene3D" id="2.40.50.140">
    <property type="entry name" value="Nucleic acid-binding proteins"/>
    <property type="match status" value="1"/>
</dbReference>
<dbReference type="Gene3D" id="3.40.50.300">
    <property type="entry name" value="P-loop containing nucleotide triphosphate hydrolases"/>
    <property type="match status" value="1"/>
</dbReference>
<dbReference type="Gene3D" id="1.10.40.50">
    <property type="entry name" value="Probable gtpase engc, domain 3"/>
    <property type="match status" value="1"/>
</dbReference>
<dbReference type="HAMAP" id="MF_01820">
    <property type="entry name" value="GTPase_RsgA"/>
    <property type="match status" value="1"/>
</dbReference>
<dbReference type="InterPro" id="IPR030378">
    <property type="entry name" value="G_CP_dom"/>
</dbReference>
<dbReference type="InterPro" id="IPR012340">
    <property type="entry name" value="NA-bd_OB-fold"/>
</dbReference>
<dbReference type="InterPro" id="IPR027417">
    <property type="entry name" value="P-loop_NTPase"/>
</dbReference>
<dbReference type="InterPro" id="IPR004881">
    <property type="entry name" value="Ribosome_biogen_GTPase_RsgA"/>
</dbReference>
<dbReference type="InterPro" id="IPR010914">
    <property type="entry name" value="RsgA_GTPase_dom"/>
</dbReference>
<dbReference type="InterPro" id="IPR031944">
    <property type="entry name" value="RsgA_N"/>
</dbReference>
<dbReference type="NCBIfam" id="TIGR00157">
    <property type="entry name" value="ribosome small subunit-dependent GTPase A"/>
    <property type="match status" value="1"/>
</dbReference>
<dbReference type="PANTHER" id="PTHR32120">
    <property type="entry name" value="SMALL RIBOSOMAL SUBUNIT BIOGENESIS GTPASE RSGA"/>
    <property type="match status" value="1"/>
</dbReference>
<dbReference type="PANTHER" id="PTHR32120:SF11">
    <property type="entry name" value="SMALL RIBOSOMAL SUBUNIT BIOGENESIS GTPASE RSGA 1, MITOCHONDRIAL-RELATED"/>
    <property type="match status" value="1"/>
</dbReference>
<dbReference type="Pfam" id="PF03193">
    <property type="entry name" value="RsgA_GTPase"/>
    <property type="match status" value="1"/>
</dbReference>
<dbReference type="Pfam" id="PF16745">
    <property type="entry name" value="RsgA_N"/>
    <property type="match status" value="1"/>
</dbReference>
<dbReference type="SUPFAM" id="SSF50249">
    <property type="entry name" value="Nucleic acid-binding proteins"/>
    <property type="match status" value="1"/>
</dbReference>
<dbReference type="SUPFAM" id="SSF52540">
    <property type="entry name" value="P-loop containing nucleoside triphosphate hydrolases"/>
    <property type="match status" value="1"/>
</dbReference>
<dbReference type="PROSITE" id="PS50936">
    <property type="entry name" value="ENGC_GTPASE"/>
    <property type="match status" value="1"/>
</dbReference>
<dbReference type="PROSITE" id="PS51721">
    <property type="entry name" value="G_CP"/>
    <property type="match status" value="1"/>
</dbReference>
<proteinExistence type="inferred from homology"/>
<keyword id="KW-0963">Cytoplasm</keyword>
<keyword id="KW-0342">GTP-binding</keyword>
<keyword id="KW-0378">Hydrolase</keyword>
<keyword id="KW-0479">Metal-binding</keyword>
<keyword id="KW-0547">Nucleotide-binding</keyword>
<keyword id="KW-1185">Reference proteome</keyword>
<keyword id="KW-0690">Ribosome biogenesis</keyword>
<keyword id="KW-0694">RNA-binding</keyword>
<keyword id="KW-0699">rRNA-binding</keyword>
<keyword id="KW-0862">Zinc</keyword>
<reference key="1">
    <citation type="journal article" date="2003" name="Proc. Natl. Acad. Sci. U.S.A.">
        <title>Complete genome sequence of Lactobacillus plantarum WCFS1.</title>
        <authorList>
            <person name="Kleerebezem M."/>
            <person name="Boekhorst J."/>
            <person name="van Kranenburg R."/>
            <person name="Molenaar D."/>
            <person name="Kuipers O.P."/>
            <person name="Leer R."/>
            <person name="Tarchini R."/>
            <person name="Peters S.A."/>
            <person name="Sandbrink H.M."/>
            <person name="Fiers M.W.E.J."/>
            <person name="Stiekema W."/>
            <person name="Klein Lankhorst R.M."/>
            <person name="Bron P.A."/>
            <person name="Hoffer S.M."/>
            <person name="Nierop Groot M.N."/>
            <person name="Kerkhoven R."/>
            <person name="De Vries M."/>
            <person name="Ursing B."/>
            <person name="De Vos W.M."/>
            <person name="Siezen R.J."/>
        </authorList>
    </citation>
    <scope>NUCLEOTIDE SEQUENCE [LARGE SCALE GENOMIC DNA]</scope>
    <source>
        <strain>ATCC BAA-793 / NCIMB 8826 / WCFS1</strain>
    </source>
</reference>
<reference key="2">
    <citation type="journal article" date="2012" name="J. Bacteriol.">
        <title>Complete resequencing and reannotation of the Lactobacillus plantarum WCFS1 genome.</title>
        <authorList>
            <person name="Siezen R.J."/>
            <person name="Francke C."/>
            <person name="Renckens B."/>
            <person name="Boekhorst J."/>
            <person name="Wels M."/>
            <person name="Kleerebezem M."/>
            <person name="van Hijum S.A."/>
        </authorList>
    </citation>
    <scope>NUCLEOTIDE SEQUENCE [LARGE SCALE GENOMIC DNA]</scope>
    <scope>GENOME REANNOTATION</scope>
    <source>
        <strain>ATCC BAA-793 / NCIMB 8826 / WCFS1</strain>
    </source>
</reference>
<protein>
    <recommendedName>
        <fullName evidence="1">Small ribosomal subunit biogenesis GTPase RsgA 1</fullName>
        <ecNumber evidence="1">3.6.1.-</ecNumber>
    </recommendedName>
</protein>
<evidence type="ECO:0000255" key="1">
    <source>
        <dbReference type="HAMAP-Rule" id="MF_01820"/>
    </source>
</evidence>
<evidence type="ECO:0000255" key="2">
    <source>
        <dbReference type="PROSITE-ProRule" id="PRU01058"/>
    </source>
</evidence>
<sequence length="298" mass="32953">MKIGQIRQSLSGFYDVYADGQMYRTRARGNFRKRRITPLVGDNVEFDAATPQEGYVLNILDRQTQLVRPPVANVDLGIVVTATTEQEFSTNLLDRQLVALAVAGIEPLLYFAKTDLLTDEVYQQRLTLADAYRQIGYQVICERTAFSPAALAAVKTALAGHVAVVMGQTGAGKSTLLNHLQPGLALATGEISQALNRGKHTTRKVSLIPIADGLVADTPGFSSYEVFDIAANELTHYFPEFVRLSVDCKYRGCVHINEPQCAVKQALAAGELLASRYDNYLQFYETIKNKKVIYNKKK</sequence>
<accession>Q88WK9</accession>
<accession>F9UNZ4</accession>
<gene>
    <name evidence="1" type="primary">rsgA1</name>
    <name type="ordered locus">lp_1620</name>
</gene>